<name>DCD_ECO8A</name>
<proteinExistence type="inferred from homology"/>
<protein>
    <recommendedName>
        <fullName evidence="1">dCTP deaminase</fullName>
        <ecNumber evidence="1">3.5.4.13</ecNumber>
    </recommendedName>
    <alternativeName>
        <fullName evidence="1">Deoxycytidine triphosphate deaminase</fullName>
    </alternativeName>
</protein>
<accession>B7M449</accession>
<feature type="chain" id="PRO_1000117971" description="dCTP deaminase">
    <location>
        <begin position="1"/>
        <end position="193"/>
    </location>
</feature>
<feature type="region of interest" description="Disordered" evidence="2">
    <location>
        <begin position="169"/>
        <end position="193"/>
    </location>
</feature>
<feature type="active site" description="Proton donor/acceptor" evidence="1">
    <location>
        <position position="138"/>
    </location>
</feature>
<feature type="binding site" evidence="1">
    <location>
        <begin position="110"/>
        <end position="115"/>
    </location>
    <ligand>
        <name>dCTP</name>
        <dbReference type="ChEBI" id="CHEBI:61481"/>
    </ligand>
</feature>
<feature type="binding site" evidence="1">
    <location>
        <position position="128"/>
    </location>
    <ligand>
        <name>dCTP</name>
        <dbReference type="ChEBI" id="CHEBI:61481"/>
    </ligand>
</feature>
<feature type="binding site" evidence="1">
    <location>
        <begin position="136"/>
        <end position="138"/>
    </location>
    <ligand>
        <name>dCTP</name>
        <dbReference type="ChEBI" id="CHEBI:61481"/>
    </ligand>
</feature>
<feature type="binding site" evidence="1">
    <location>
        <position position="171"/>
    </location>
    <ligand>
        <name>dCTP</name>
        <dbReference type="ChEBI" id="CHEBI:61481"/>
    </ligand>
</feature>
<feature type="binding site" evidence="1">
    <location>
        <position position="178"/>
    </location>
    <ligand>
        <name>dCTP</name>
        <dbReference type="ChEBI" id="CHEBI:61481"/>
    </ligand>
</feature>
<feature type="binding site" evidence="1">
    <location>
        <position position="182"/>
    </location>
    <ligand>
        <name>dCTP</name>
        <dbReference type="ChEBI" id="CHEBI:61481"/>
    </ligand>
</feature>
<sequence>MRLCDRDIEAWLDEGRLSINPRPPVERINGATVDVRLGNKFRTFRGHTAAFIDLSGPKDEVSAALDRVMSDEIVLDEGEAFYLHPGELALAVTLESVTLPADLVGWLDGRSSLARLGLMVHVTAHRIDPGWSGCIVLEFYNSGKLPLALRPGMLIGALSFEPLSGPAARPYNRREDAKYRNQQGAVASRIDKD</sequence>
<gene>
    <name evidence="1" type="primary">dcd</name>
    <name type="ordered locus">ECIAI1_2141</name>
</gene>
<organism>
    <name type="scientific">Escherichia coli O8 (strain IAI1)</name>
    <dbReference type="NCBI Taxonomy" id="585034"/>
    <lineage>
        <taxon>Bacteria</taxon>
        <taxon>Pseudomonadati</taxon>
        <taxon>Pseudomonadota</taxon>
        <taxon>Gammaproteobacteria</taxon>
        <taxon>Enterobacterales</taxon>
        <taxon>Enterobacteriaceae</taxon>
        <taxon>Escherichia</taxon>
    </lineage>
</organism>
<dbReference type="EC" id="3.5.4.13" evidence="1"/>
<dbReference type="EMBL" id="CU928160">
    <property type="protein sequence ID" value="CAQ98988.1"/>
    <property type="molecule type" value="Genomic_DNA"/>
</dbReference>
<dbReference type="RefSeq" id="WP_001234767.1">
    <property type="nucleotide sequence ID" value="NC_011741.1"/>
</dbReference>
<dbReference type="SMR" id="B7M449"/>
<dbReference type="GeneID" id="93775126"/>
<dbReference type="KEGG" id="ecr:ECIAI1_2141"/>
<dbReference type="HOGENOM" id="CLU_087476_2_0_6"/>
<dbReference type="UniPathway" id="UPA00610">
    <property type="reaction ID" value="UER00665"/>
</dbReference>
<dbReference type="GO" id="GO:0008829">
    <property type="term" value="F:dCTP deaminase activity"/>
    <property type="evidence" value="ECO:0007669"/>
    <property type="project" value="UniProtKB-UniRule"/>
</dbReference>
<dbReference type="GO" id="GO:0000166">
    <property type="term" value="F:nucleotide binding"/>
    <property type="evidence" value="ECO:0007669"/>
    <property type="project" value="UniProtKB-KW"/>
</dbReference>
<dbReference type="GO" id="GO:0006226">
    <property type="term" value="P:dUMP biosynthetic process"/>
    <property type="evidence" value="ECO:0007669"/>
    <property type="project" value="UniProtKB-UniPathway"/>
</dbReference>
<dbReference type="GO" id="GO:0006229">
    <property type="term" value="P:dUTP biosynthetic process"/>
    <property type="evidence" value="ECO:0007669"/>
    <property type="project" value="UniProtKB-UniRule"/>
</dbReference>
<dbReference type="GO" id="GO:0015949">
    <property type="term" value="P:nucleobase-containing small molecule interconversion"/>
    <property type="evidence" value="ECO:0007669"/>
    <property type="project" value="TreeGrafter"/>
</dbReference>
<dbReference type="CDD" id="cd07557">
    <property type="entry name" value="trimeric_dUTPase"/>
    <property type="match status" value="1"/>
</dbReference>
<dbReference type="FunFam" id="2.70.40.10:FF:000003">
    <property type="entry name" value="dCTP deaminase"/>
    <property type="match status" value="1"/>
</dbReference>
<dbReference type="Gene3D" id="2.70.40.10">
    <property type="match status" value="1"/>
</dbReference>
<dbReference type="HAMAP" id="MF_00146">
    <property type="entry name" value="dCTP_deaminase"/>
    <property type="match status" value="1"/>
</dbReference>
<dbReference type="InterPro" id="IPR011962">
    <property type="entry name" value="dCTP_deaminase"/>
</dbReference>
<dbReference type="InterPro" id="IPR036157">
    <property type="entry name" value="dUTPase-like_sf"/>
</dbReference>
<dbReference type="InterPro" id="IPR033704">
    <property type="entry name" value="dUTPase_trimeric"/>
</dbReference>
<dbReference type="NCBIfam" id="TIGR02274">
    <property type="entry name" value="dCTP_deam"/>
    <property type="match status" value="1"/>
</dbReference>
<dbReference type="PANTHER" id="PTHR42680">
    <property type="entry name" value="DCTP DEAMINASE"/>
    <property type="match status" value="1"/>
</dbReference>
<dbReference type="PANTHER" id="PTHR42680:SF3">
    <property type="entry name" value="DCTP DEAMINASE"/>
    <property type="match status" value="1"/>
</dbReference>
<dbReference type="Pfam" id="PF22769">
    <property type="entry name" value="DCD"/>
    <property type="match status" value="1"/>
</dbReference>
<dbReference type="SUPFAM" id="SSF51283">
    <property type="entry name" value="dUTPase-like"/>
    <property type="match status" value="1"/>
</dbReference>
<comment type="function">
    <text evidence="1">Catalyzes the deamination of dCTP to dUTP.</text>
</comment>
<comment type="catalytic activity">
    <reaction evidence="1">
        <text>dCTP + H2O + H(+) = dUTP + NH4(+)</text>
        <dbReference type="Rhea" id="RHEA:22680"/>
        <dbReference type="ChEBI" id="CHEBI:15377"/>
        <dbReference type="ChEBI" id="CHEBI:15378"/>
        <dbReference type="ChEBI" id="CHEBI:28938"/>
        <dbReference type="ChEBI" id="CHEBI:61481"/>
        <dbReference type="ChEBI" id="CHEBI:61555"/>
        <dbReference type="EC" id="3.5.4.13"/>
    </reaction>
</comment>
<comment type="pathway">
    <text evidence="1">Pyrimidine metabolism; dUMP biosynthesis; dUMP from dCTP (dUTP route): step 1/2.</text>
</comment>
<comment type="subunit">
    <text evidence="1">Homotrimer.</text>
</comment>
<comment type="similarity">
    <text evidence="1">Belongs to the dCTP deaminase family.</text>
</comment>
<reference key="1">
    <citation type="journal article" date="2009" name="PLoS Genet.">
        <title>Organised genome dynamics in the Escherichia coli species results in highly diverse adaptive paths.</title>
        <authorList>
            <person name="Touchon M."/>
            <person name="Hoede C."/>
            <person name="Tenaillon O."/>
            <person name="Barbe V."/>
            <person name="Baeriswyl S."/>
            <person name="Bidet P."/>
            <person name="Bingen E."/>
            <person name="Bonacorsi S."/>
            <person name="Bouchier C."/>
            <person name="Bouvet O."/>
            <person name="Calteau A."/>
            <person name="Chiapello H."/>
            <person name="Clermont O."/>
            <person name="Cruveiller S."/>
            <person name="Danchin A."/>
            <person name="Diard M."/>
            <person name="Dossat C."/>
            <person name="Karoui M.E."/>
            <person name="Frapy E."/>
            <person name="Garry L."/>
            <person name="Ghigo J.M."/>
            <person name="Gilles A.M."/>
            <person name="Johnson J."/>
            <person name="Le Bouguenec C."/>
            <person name="Lescat M."/>
            <person name="Mangenot S."/>
            <person name="Martinez-Jehanne V."/>
            <person name="Matic I."/>
            <person name="Nassif X."/>
            <person name="Oztas S."/>
            <person name="Petit M.A."/>
            <person name="Pichon C."/>
            <person name="Rouy Z."/>
            <person name="Ruf C.S."/>
            <person name="Schneider D."/>
            <person name="Tourret J."/>
            <person name="Vacherie B."/>
            <person name="Vallenet D."/>
            <person name="Medigue C."/>
            <person name="Rocha E.P.C."/>
            <person name="Denamur E."/>
        </authorList>
    </citation>
    <scope>NUCLEOTIDE SEQUENCE [LARGE SCALE GENOMIC DNA]</scope>
    <source>
        <strain>IAI1</strain>
    </source>
</reference>
<evidence type="ECO:0000255" key="1">
    <source>
        <dbReference type="HAMAP-Rule" id="MF_00146"/>
    </source>
</evidence>
<evidence type="ECO:0000256" key="2">
    <source>
        <dbReference type="SAM" id="MobiDB-lite"/>
    </source>
</evidence>
<keyword id="KW-0378">Hydrolase</keyword>
<keyword id="KW-0546">Nucleotide metabolism</keyword>
<keyword id="KW-0547">Nucleotide-binding</keyword>